<accession>A0A348HAY5</accession>
<proteinExistence type="evidence at protein level"/>
<organism>
    <name type="scientific">Fungal sp. (strain ATCC 74256)</name>
    <dbReference type="NCBI Taxonomy" id="1729595"/>
    <lineage>
        <taxon>Eukaryota</taxon>
        <taxon>Fungi</taxon>
    </lineage>
</organism>
<sequence>MALSSQAQGKLFVRDSRTSREYEIPISNNTINAADFQKINLPTKGKSLTKALGLQLYDPGMQNTAIKKTEIIGRDPSTGLPLLRGVTSQELWKRRCDFEELFSLMVFGNYPTIVEREALRYQFAEYMKEVPKVVGSVIRKFPPSSPPLPMITAGLSAYLSSDPDFIPAIHGGNIYHRNPRAADEAAIKTAAVYAVVIGLISCHKKGINFVPADTDDTFLENLFRMCGLVDPATRRPDPHVLAVFRKGLVLNCDNGMTQSNLVLCATASSLCDPISCLISAISAAYGPLHYGAQEAGYRTLSEIGSADRVPHFLEQVKRRERRLFGYGHRTFATEDPRLNAVKGWLQELDFDSKREPLMKIAEEIDRLAAQDDYFTSRGLRANADFYTLFVFRAYGFDWDMIGAANFCMRIIGFMAHWREAMEQEIKIFRARDYYVGPSKKDPNRESSGTGILAQARL</sequence>
<reference key="1">
    <citation type="journal article" date="2015" name="Org. Lett.">
        <title>Biosynthetic study on antihypercholesterolemic agent phomoidride: general biogenesis of fungal dimeric anhydrides.</title>
        <authorList>
            <person name="Fujii R."/>
            <person name="Matsu Y."/>
            <person name="Minami A."/>
            <person name="Nagamine S."/>
            <person name="Takeuchi I."/>
            <person name="Gomi K."/>
            <person name="Oikawa H."/>
        </authorList>
    </citation>
    <scope>NUCLEOTIDE SEQUENCE [GENOMIC DNA]</scope>
    <scope>INDUCTION</scope>
    <scope>FUNCTION</scope>
    <scope>CATALYTIC ACTIVITY</scope>
    <scope>PATHWAY</scope>
    <source>
        <strain>ATCC 74256</strain>
    </source>
</reference>
<reference key="2">
    <citation type="journal article" date="1997" name="J. Antibiot.">
        <title>CP-225,917 and CP-263,114, novel Ras farnesylation inhibitors from an unidentified fungus. I. Taxonomy, fermentation, isolation, and biochemical properties.</title>
        <authorList>
            <person name="Dabrah T.T."/>
            <person name="Harwood H.J. Jr."/>
            <person name="Huang L.H."/>
            <person name="Jankovich N.D."/>
            <person name="Kaneko T."/>
            <person name="Li J.C."/>
            <person name="Lindsey S."/>
            <person name="Moshier P.M."/>
            <person name="Subashi T.A."/>
            <person name="Therrien M."/>
            <person name="Watts P.C."/>
        </authorList>
    </citation>
    <scope>BIOTECHNOLOGY</scope>
</reference>
<reference key="3">
    <citation type="journal article" date="2022" name="J. Am. Chem. Soc.">
        <title>Elucidation of late-stage biosynthesis of phomoidride: proposal of cyclization mechanism affording characteristic nine-membered ring of fungal dimeric anhydride.</title>
        <authorList>
            <person name="Yamamoto S."/>
            <person name="Matsuyama T."/>
            <person name="Ozaki T."/>
            <person name="Takino J."/>
            <person name="Sato H."/>
            <person name="Uchiyama M."/>
            <person name="Minami A."/>
            <person name="Oikawa H."/>
        </authorList>
    </citation>
    <scope>FUNCTION</scope>
</reference>
<dbReference type="EC" id="2.3.3.-" evidence="2"/>
<dbReference type="EMBL" id="LC086931">
    <property type="protein sequence ID" value="BBG28507.1"/>
    <property type="molecule type" value="Genomic_DNA"/>
</dbReference>
<dbReference type="SMR" id="A0A348HAY5"/>
<dbReference type="GO" id="GO:0005759">
    <property type="term" value="C:mitochondrial matrix"/>
    <property type="evidence" value="ECO:0007669"/>
    <property type="project" value="TreeGrafter"/>
</dbReference>
<dbReference type="GO" id="GO:0004108">
    <property type="term" value="F:citrate (Si)-synthase activity"/>
    <property type="evidence" value="ECO:0007669"/>
    <property type="project" value="TreeGrafter"/>
</dbReference>
<dbReference type="GO" id="GO:0005975">
    <property type="term" value="P:carbohydrate metabolic process"/>
    <property type="evidence" value="ECO:0007669"/>
    <property type="project" value="TreeGrafter"/>
</dbReference>
<dbReference type="GO" id="GO:0006099">
    <property type="term" value="P:tricarboxylic acid cycle"/>
    <property type="evidence" value="ECO:0007669"/>
    <property type="project" value="TreeGrafter"/>
</dbReference>
<dbReference type="Gene3D" id="1.10.580.10">
    <property type="entry name" value="Citrate Synthase, domain 1"/>
    <property type="match status" value="1"/>
</dbReference>
<dbReference type="Gene3D" id="1.10.230.10">
    <property type="entry name" value="Cytochrome P450-Terp, domain 2"/>
    <property type="match status" value="1"/>
</dbReference>
<dbReference type="InterPro" id="IPR016142">
    <property type="entry name" value="Citrate_synth-like_lrg_a-sub"/>
</dbReference>
<dbReference type="InterPro" id="IPR016143">
    <property type="entry name" value="Citrate_synth-like_sm_a-sub"/>
</dbReference>
<dbReference type="InterPro" id="IPR002020">
    <property type="entry name" value="Citrate_synthase"/>
</dbReference>
<dbReference type="InterPro" id="IPR036969">
    <property type="entry name" value="Citrate_synthase_sf"/>
</dbReference>
<dbReference type="PANTHER" id="PTHR11739">
    <property type="entry name" value="CITRATE SYNTHASE"/>
    <property type="match status" value="1"/>
</dbReference>
<dbReference type="PANTHER" id="PTHR11739:SF4">
    <property type="entry name" value="CITRATE SYNTHASE, PEROXISOMAL"/>
    <property type="match status" value="1"/>
</dbReference>
<dbReference type="Pfam" id="PF00285">
    <property type="entry name" value="Citrate_synt"/>
    <property type="match status" value="1"/>
</dbReference>
<dbReference type="SUPFAM" id="SSF48256">
    <property type="entry name" value="Citrate synthase"/>
    <property type="match status" value="1"/>
</dbReference>
<gene>
    <name evidence="4" type="primary">phiJ</name>
</gene>
<feature type="chain" id="PRO_0000458946" description="Alkylcitrate synthase phiJ">
    <location>
        <begin position="1"/>
        <end position="457"/>
    </location>
</feature>
<feature type="active site" evidence="1">
    <location>
        <position position="328"/>
    </location>
</feature>
<feature type="active site" evidence="1">
    <location>
        <position position="384"/>
    </location>
</feature>
<protein>
    <recommendedName>
        <fullName evidence="4">Alkylcitrate synthase phiJ</fullName>
        <shortName evidence="4">ACS</shortName>
        <ecNumber evidence="2">2.3.3.-</ecNumber>
    </recommendedName>
    <alternativeName>
        <fullName evidence="4">Phomoidride biosynthesis cluster protein I</fullName>
    </alternativeName>
</protein>
<comment type="function">
    <text evidence="2 6">Alkylcitrate synthase; part of the gene cluster that mediates the biosynthesis of the antihypercholesterolemic agents phomoidrides which are dimeric anhydrides (PubMed:26558485). Within the pathway, the alkylcitrate synthase (ACS) phiJ and the alkylcitrate dehydratase (ACDH) phiI produce the decarboxylated monomeric anhydrides by coupling the C12-fatty acyl product from phiA with oxalacetic acid (PubMed:26558485). The pathway begins with the highly reducing polyketide synthase phiA that catalyzes the formation of a C12-fatty acyl-ACP, starting from one acetate and 5 malonate units. The hydrolase phiM is involved in the release of the C12-fatty acyl chain from phiA. The alkylcitrate synthase (ACS) phiJ and the alkylcitrate dehydratase (ACDH) phiI then give rise to decarboxylated monomeric anhydrides by coupling the C12-fatty acyl chain with oxalacetic acid. The cyclase phiC is responsible for the dimerization of the monomeric anhydrides which leads to the production of prephomoidride that contains the characteristic bicyclo[4.3.1]deca-1,6-diene system of phomoidrides. Iterative oxidation catalyzed by the alpha-ketoglutarate-dependent dioxygenase phiK produced then phomoidride A. Finally, the methyltransferase phiE converts phomoidride A to phomoidride B via an acetalization reaction. The phosphatidylethanolamine-binding protein phiB and phiN are not essential for dimerization and their functions have still to be determined (Probable).</text>
</comment>
<comment type="catalytic activity">
    <reaction evidence="2">
        <text>(2E,10E)-dode-2,10-dicenoyl-CoA + oxaloacetate + H2O = (4E,11E)-2-hydroxytrideca-4,11-dien-1,2,3-tricarboxylate + CoA + H(+)</text>
        <dbReference type="Rhea" id="RHEA:77751"/>
        <dbReference type="ChEBI" id="CHEBI:15377"/>
        <dbReference type="ChEBI" id="CHEBI:15378"/>
        <dbReference type="ChEBI" id="CHEBI:16452"/>
        <dbReference type="ChEBI" id="CHEBI:57287"/>
        <dbReference type="ChEBI" id="CHEBI:197428"/>
        <dbReference type="ChEBI" id="CHEBI:197445"/>
    </reaction>
    <physiologicalReaction direction="left-to-right" evidence="2">
        <dbReference type="Rhea" id="RHEA:77752"/>
    </physiologicalReaction>
</comment>
<comment type="pathway">
    <text evidence="2">Secondary metabolite biosynthesis.</text>
</comment>
<comment type="induction">
    <text evidence="2">expression is induced under low pH conditions.</text>
</comment>
<comment type="biotechnology">
    <text evidence="3">Phomoidrides A and B (also known as CP-225,917 and CP-263,114) are potent inhibitors of Ras farnesyltransferase and squalene synthase (PubMed:9066758). CP-225,917 and CP-263,114 inhibit Ras farnesyl transferase from rat brain with IC(50) values of 6 uM and 20 uoM, respectively (PubMed:9066758). CP-225,917 inhibits squalene synthase with an IC(50) value of 43 uM and CP-263,114 with an IC(50) of 160 uM (PubMed:9066758).</text>
</comment>
<comment type="similarity">
    <text evidence="5">Belongs to the citrate synthase family.</text>
</comment>
<evidence type="ECO:0000255" key="1">
    <source>
        <dbReference type="PIRSR" id="PIRSR001369-1"/>
    </source>
</evidence>
<evidence type="ECO:0000269" key="2">
    <source>
    </source>
</evidence>
<evidence type="ECO:0000269" key="3">
    <source>
    </source>
</evidence>
<evidence type="ECO:0000303" key="4">
    <source>
    </source>
</evidence>
<evidence type="ECO:0000305" key="5"/>
<evidence type="ECO:0000305" key="6">
    <source>
    </source>
</evidence>
<name>PHIJ_FUNX7</name>
<keyword id="KW-0808">Transferase</keyword>